<dbReference type="EC" id="3.1.-.-" evidence="1"/>
<dbReference type="EMBL" id="AP009256">
    <property type="protein sequence ID" value="BAF40206.1"/>
    <property type="molecule type" value="Genomic_DNA"/>
</dbReference>
<dbReference type="RefSeq" id="WP_011743716.1">
    <property type="nucleotide sequence ID" value="NC_008618.1"/>
</dbReference>
<dbReference type="SMR" id="A1A3C3"/>
<dbReference type="STRING" id="367928.BAD_1425"/>
<dbReference type="PaxDb" id="1680-BADO_1606"/>
<dbReference type="GeneID" id="4556210"/>
<dbReference type="KEGG" id="bad:BAD_1425"/>
<dbReference type="HOGENOM" id="CLU_069350_0_0_11"/>
<dbReference type="Proteomes" id="UP000008702">
    <property type="component" value="Chromosome"/>
</dbReference>
<dbReference type="GO" id="GO:0005737">
    <property type="term" value="C:cytoplasm"/>
    <property type="evidence" value="ECO:0007669"/>
    <property type="project" value="UniProtKB-SubCell"/>
</dbReference>
<dbReference type="GO" id="GO:0003677">
    <property type="term" value="F:DNA binding"/>
    <property type="evidence" value="ECO:0007669"/>
    <property type="project" value="UniProtKB-KW"/>
</dbReference>
<dbReference type="GO" id="GO:0000014">
    <property type="term" value="F:single-stranded DNA endodeoxyribonuclease activity"/>
    <property type="evidence" value="ECO:0007669"/>
    <property type="project" value="UniProtKB-UniRule"/>
</dbReference>
<dbReference type="CDD" id="cd22341">
    <property type="entry name" value="NucS-like"/>
    <property type="match status" value="1"/>
</dbReference>
<dbReference type="Gene3D" id="2.70.180.20">
    <property type="match status" value="1"/>
</dbReference>
<dbReference type="Gene3D" id="3.40.1350.10">
    <property type="match status" value="1"/>
</dbReference>
<dbReference type="HAMAP" id="MF_00722">
    <property type="entry name" value="NucS"/>
    <property type="match status" value="1"/>
</dbReference>
<dbReference type="InterPro" id="IPR002793">
    <property type="entry name" value="Endonuclease_NucS"/>
</dbReference>
<dbReference type="InterPro" id="IPR048301">
    <property type="entry name" value="NucS_C"/>
</dbReference>
<dbReference type="InterPro" id="IPR048302">
    <property type="entry name" value="NucS_N"/>
</dbReference>
<dbReference type="InterPro" id="IPR049173">
    <property type="entry name" value="NucS_N_sf"/>
</dbReference>
<dbReference type="InterPro" id="IPR011856">
    <property type="entry name" value="tRNA_endonuc-like_dom_sf"/>
</dbReference>
<dbReference type="NCBIfam" id="NF002876">
    <property type="entry name" value="PRK03298.1"/>
    <property type="match status" value="1"/>
</dbReference>
<dbReference type="PANTHER" id="PTHR38814">
    <property type="entry name" value="ENDONUCLEASE NUCS"/>
    <property type="match status" value="1"/>
</dbReference>
<dbReference type="PANTHER" id="PTHR38814:SF1">
    <property type="entry name" value="ENDONUCLEASE NUCS"/>
    <property type="match status" value="1"/>
</dbReference>
<dbReference type="Pfam" id="PF01939">
    <property type="entry name" value="NucS_C"/>
    <property type="match status" value="1"/>
</dbReference>
<dbReference type="Pfam" id="PF21003">
    <property type="entry name" value="NucS_N"/>
    <property type="match status" value="1"/>
</dbReference>
<accession>A1A3C3</accession>
<sequence>MRIIVADCSAEYSERLNASLPLAKRVLLIKADNSLLIFSELGSYKPLNWMSAPCSIRDITPDHADDDVDTEVPQKVIRASADKSNDVLEVTLQRIYSDESYDLGEDPGLIKDGVEDHLQKYLAEQIERIGKGAKLVRREYPTAIGPVDIMAIDGNGEHVAIEIKRNGGIDGVEQLTRYCDLLNRDPLLAPVHGIFAAQTITPQARVLAQDRGFKCLLLDYEEMKGTEDDSLRLF</sequence>
<name>NUCS_BIFAA</name>
<evidence type="ECO:0000255" key="1">
    <source>
        <dbReference type="HAMAP-Rule" id="MF_00722"/>
    </source>
</evidence>
<feature type="chain" id="PRO_1000045826" description="Endonuclease NucS">
    <location>
        <begin position="1"/>
        <end position="234"/>
    </location>
</feature>
<keyword id="KW-0963">Cytoplasm</keyword>
<keyword id="KW-0238">DNA-binding</keyword>
<keyword id="KW-0255">Endonuclease</keyword>
<keyword id="KW-0378">Hydrolase</keyword>
<keyword id="KW-0540">Nuclease</keyword>
<keyword id="KW-1185">Reference proteome</keyword>
<comment type="function">
    <text evidence="1">Cleaves both 3' and 5' ssDNA extremities of branched DNA structures.</text>
</comment>
<comment type="subcellular location">
    <subcellularLocation>
        <location evidence="1">Cytoplasm</location>
    </subcellularLocation>
</comment>
<comment type="similarity">
    <text evidence="1">Belongs to the NucS endonuclease family.</text>
</comment>
<gene>
    <name evidence="1" type="primary">nucS</name>
    <name type="ordered locus">BAD_1425</name>
</gene>
<proteinExistence type="inferred from homology"/>
<reference key="1">
    <citation type="submission" date="2006-12" db="EMBL/GenBank/DDBJ databases">
        <title>Bifidobacterium adolescentis complete genome sequence.</title>
        <authorList>
            <person name="Suzuki T."/>
            <person name="Tsuda Y."/>
            <person name="Kanou N."/>
            <person name="Inoue T."/>
            <person name="Kumazaki K."/>
            <person name="Nagano S."/>
            <person name="Hirai S."/>
            <person name="Tanaka K."/>
            <person name="Watanabe K."/>
        </authorList>
    </citation>
    <scope>NUCLEOTIDE SEQUENCE [LARGE SCALE GENOMIC DNA]</scope>
    <source>
        <strain>ATCC 15703 / DSM 20083 / NCTC 11814 / E194a</strain>
    </source>
</reference>
<organism>
    <name type="scientific">Bifidobacterium adolescentis (strain ATCC 15703 / DSM 20083 / NCTC 11814 / E194a)</name>
    <dbReference type="NCBI Taxonomy" id="367928"/>
    <lineage>
        <taxon>Bacteria</taxon>
        <taxon>Bacillati</taxon>
        <taxon>Actinomycetota</taxon>
        <taxon>Actinomycetes</taxon>
        <taxon>Bifidobacteriales</taxon>
        <taxon>Bifidobacteriaceae</taxon>
        <taxon>Bifidobacterium</taxon>
    </lineage>
</organism>
<protein>
    <recommendedName>
        <fullName evidence="1">Endonuclease NucS</fullName>
        <ecNumber evidence="1">3.1.-.-</ecNumber>
    </recommendedName>
</protein>